<dbReference type="EC" id="2.1.1.176" evidence="1"/>
<dbReference type="EMBL" id="CP000800">
    <property type="protein sequence ID" value="ABV19377.1"/>
    <property type="molecule type" value="Genomic_DNA"/>
</dbReference>
<dbReference type="RefSeq" id="WP_000744779.1">
    <property type="nucleotide sequence ID" value="NC_009801.1"/>
</dbReference>
<dbReference type="SMR" id="A7ZSH7"/>
<dbReference type="GeneID" id="75204129"/>
<dbReference type="KEGG" id="ecw:EcE24377A_3771"/>
<dbReference type="HOGENOM" id="CLU_005316_0_4_6"/>
<dbReference type="Proteomes" id="UP000001122">
    <property type="component" value="Chromosome"/>
</dbReference>
<dbReference type="GO" id="GO:0005829">
    <property type="term" value="C:cytosol"/>
    <property type="evidence" value="ECO:0007669"/>
    <property type="project" value="TreeGrafter"/>
</dbReference>
<dbReference type="GO" id="GO:0003723">
    <property type="term" value="F:RNA binding"/>
    <property type="evidence" value="ECO:0007669"/>
    <property type="project" value="UniProtKB-KW"/>
</dbReference>
<dbReference type="GO" id="GO:0009383">
    <property type="term" value="F:rRNA (cytosine-C5-)-methyltransferase activity"/>
    <property type="evidence" value="ECO:0007669"/>
    <property type="project" value="TreeGrafter"/>
</dbReference>
<dbReference type="GO" id="GO:0006355">
    <property type="term" value="P:regulation of DNA-templated transcription"/>
    <property type="evidence" value="ECO:0007669"/>
    <property type="project" value="InterPro"/>
</dbReference>
<dbReference type="GO" id="GO:0070475">
    <property type="term" value="P:rRNA base methylation"/>
    <property type="evidence" value="ECO:0007669"/>
    <property type="project" value="TreeGrafter"/>
</dbReference>
<dbReference type="CDD" id="cd02440">
    <property type="entry name" value="AdoMet_MTases"/>
    <property type="match status" value="1"/>
</dbReference>
<dbReference type="CDD" id="cd00620">
    <property type="entry name" value="Methyltransferase_Sun"/>
    <property type="match status" value="1"/>
</dbReference>
<dbReference type="FunFam" id="1.10.287.730:FF:000001">
    <property type="entry name" value="Ribosomal RNA small subunit methyltransferase B"/>
    <property type="match status" value="1"/>
</dbReference>
<dbReference type="FunFam" id="1.10.940.10:FF:000002">
    <property type="entry name" value="Ribosomal RNA small subunit methyltransferase B"/>
    <property type="match status" value="1"/>
</dbReference>
<dbReference type="FunFam" id="3.30.70.1170:FF:000002">
    <property type="entry name" value="Ribosomal RNA small subunit methyltransferase B"/>
    <property type="match status" value="1"/>
</dbReference>
<dbReference type="FunFam" id="3.40.50.150:FF:000022">
    <property type="entry name" value="Ribosomal RNA small subunit methyltransferase B"/>
    <property type="match status" value="1"/>
</dbReference>
<dbReference type="Gene3D" id="1.10.287.730">
    <property type="entry name" value="Helix hairpin bin"/>
    <property type="match status" value="1"/>
</dbReference>
<dbReference type="Gene3D" id="1.10.940.10">
    <property type="entry name" value="NusB-like"/>
    <property type="match status" value="1"/>
</dbReference>
<dbReference type="Gene3D" id="3.30.70.1170">
    <property type="entry name" value="Sun protein, domain 3"/>
    <property type="match status" value="1"/>
</dbReference>
<dbReference type="Gene3D" id="3.40.50.150">
    <property type="entry name" value="Vaccinia Virus protein VP39"/>
    <property type="match status" value="1"/>
</dbReference>
<dbReference type="HAMAP" id="MF_01856">
    <property type="entry name" value="16SrRNA_methyltr_B"/>
    <property type="match status" value="1"/>
</dbReference>
<dbReference type="InterPro" id="IPR049560">
    <property type="entry name" value="MeTrfase_RsmB-F_NOP2_cat"/>
</dbReference>
<dbReference type="InterPro" id="IPR001678">
    <property type="entry name" value="MeTrfase_RsmB-F_NOP2_dom"/>
</dbReference>
<dbReference type="InterPro" id="IPR035926">
    <property type="entry name" value="NusB-like_sf"/>
</dbReference>
<dbReference type="InterPro" id="IPR006027">
    <property type="entry name" value="NusB_RsmB_TIM44"/>
</dbReference>
<dbReference type="InterPro" id="IPR023267">
    <property type="entry name" value="RCMT"/>
</dbReference>
<dbReference type="InterPro" id="IPR004573">
    <property type="entry name" value="rRNA_ssu_MeTfrase_B"/>
</dbReference>
<dbReference type="InterPro" id="IPR023541">
    <property type="entry name" value="rRNA_ssu_MeTfrase_B_ent"/>
</dbReference>
<dbReference type="InterPro" id="IPR054728">
    <property type="entry name" value="RsmB-like_ferredoxin"/>
</dbReference>
<dbReference type="InterPro" id="IPR048019">
    <property type="entry name" value="RsmB-like_N"/>
</dbReference>
<dbReference type="InterPro" id="IPR018314">
    <property type="entry name" value="RsmB/NOL1/NOP2-like_CS"/>
</dbReference>
<dbReference type="InterPro" id="IPR029063">
    <property type="entry name" value="SAM-dependent_MTases_sf"/>
</dbReference>
<dbReference type="NCBIfam" id="NF008149">
    <property type="entry name" value="PRK10901.1"/>
    <property type="match status" value="1"/>
</dbReference>
<dbReference type="NCBIfam" id="NF011494">
    <property type="entry name" value="PRK14902.1"/>
    <property type="match status" value="1"/>
</dbReference>
<dbReference type="NCBIfam" id="TIGR00563">
    <property type="entry name" value="rsmB"/>
    <property type="match status" value="1"/>
</dbReference>
<dbReference type="PANTHER" id="PTHR22807:SF61">
    <property type="entry name" value="NOL1_NOP2_SUN FAMILY PROTEIN _ ANTITERMINATION NUSB DOMAIN-CONTAINING PROTEIN"/>
    <property type="match status" value="1"/>
</dbReference>
<dbReference type="PANTHER" id="PTHR22807">
    <property type="entry name" value="NOP2 YEAST -RELATED NOL1/NOP2/FMU SUN DOMAIN-CONTAINING"/>
    <property type="match status" value="1"/>
</dbReference>
<dbReference type="Pfam" id="PF01189">
    <property type="entry name" value="Methyltr_RsmB-F"/>
    <property type="match status" value="1"/>
</dbReference>
<dbReference type="Pfam" id="PF01029">
    <property type="entry name" value="NusB"/>
    <property type="match status" value="1"/>
</dbReference>
<dbReference type="Pfam" id="PF22458">
    <property type="entry name" value="RsmF-B_ferredox"/>
    <property type="match status" value="1"/>
</dbReference>
<dbReference type="PRINTS" id="PR02008">
    <property type="entry name" value="RCMTFAMILY"/>
</dbReference>
<dbReference type="SUPFAM" id="SSF48013">
    <property type="entry name" value="NusB-like"/>
    <property type="match status" value="1"/>
</dbReference>
<dbReference type="SUPFAM" id="SSF53335">
    <property type="entry name" value="S-adenosyl-L-methionine-dependent methyltransferases"/>
    <property type="match status" value="1"/>
</dbReference>
<dbReference type="PROSITE" id="PS01153">
    <property type="entry name" value="NOL1_NOP2_SUN"/>
    <property type="match status" value="1"/>
</dbReference>
<dbReference type="PROSITE" id="PS51686">
    <property type="entry name" value="SAM_MT_RSMB_NOP"/>
    <property type="match status" value="1"/>
</dbReference>
<organism>
    <name type="scientific">Escherichia coli O139:H28 (strain E24377A / ETEC)</name>
    <dbReference type="NCBI Taxonomy" id="331111"/>
    <lineage>
        <taxon>Bacteria</taxon>
        <taxon>Pseudomonadati</taxon>
        <taxon>Pseudomonadota</taxon>
        <taxon>Gammaproteobacteria</taxon>
        <taxon>Enterobacterales</taxon>
        <taxon>Enterobacteriaceae</taxon>
        <taxon>Escherichia</taxon>
    </lineage>
</organism>
<protein>
    <recommendedName>
        <fullName evidence="1">Ribosomal RNA small subunit methyltransferase B</fullName>
        <ecNumber evidence="1">2.1.1.176</ecNumber>
    </recommendedName>
    <alternativeName>
        <fullName evidence="1">16S rRNA m5C967 methyltransferase</fullName>
    </alternativeName>
    <alternativeName>
        <fullName evidence="1">rRNA (cytosine-C(5)-)-methyltransferase RsmB</fullName>
    </alternativeName>
</protein>
<gene>
    <name evidence="1" type="primary">rsmB</name>
    <name evidence="1" type="synonym">sun</name>
    <name type="ordered locus">EcE24377A_3771</name>
</gene>
<comment type="function">
    <text evidence="1">Specifically methylates the cytosine at position 967 (m5C967) of 16S rRNA.</text>
</comment>
<comment type="catalytic activity">
    <reaction evidence="1">
        <text>cytidine(967) in 16S rRNA + S-adenosyl-L-methionine = 5-methylcytidine(967) in 16S rRNA + S-adenosyl-L-homocysteine + H(+)</text>
        <dbReference type="Rhea" id="RHEA:42748"/>
        <dbReference type="Rhea" id="RHEA-COMP:10219"/>
        <dbReference type="Rhea" id="RHEA-COMP:10220"/>
        <dbReference type="ChEBI" id="CHEBI:15378"/>
        <dbReference type="ChEBI" id="CHEBI:57856"/>
        <dbReference type="ChEBI" id="CHEBI:59789"/>
        <dbReference type="ChEBI" id="CHEBI:74483"/>
        <dbReference type="ChEBI" id="CHEBI:82748"/>
        <dbReference type="EC" id="2.1.1.176"/>
    </reaction>
</comment>
<comment type="subcellular location">
    <subcellularLocation>
        <location evidence="1">Cytoplasm</location>
    </subcellularLocation>
</comment>
<comment type="similarity">
    <text evidence="1">Belongs to the class I-like SAM-binding methyltransferase superfamily. RsmB/NOP family.</text>
</comment>
<feature type="chain" id="PRO_0000366155" description="Ribosomal RNA small subunit methyltransferase B">
    <location>
        <begin position="1"/>
        <end position="429"/>
    </location>
</feature>
<feature type="active site" description="Nucleophile" evidence="1">
    <location>
        <position position="375"/>
    </location>
</feature>
<feature type="binding site" evidence="1">
    <location>
        <begin position="254"/>
        <end position="260"/>
    </location>
    <ligand>
        <name>S-adenosyl-L-methionine</name>
        <dbReference type="ChEBI" id="CHEBI:59789"/>
    </ligand>
</feature>
<feature type="binding site" evidence="1">
    <location>
        <position position="277"/>
    </location>
    <ligand>
        <name>S-adenosyl-L-methionine</name>
        <dbReference type="ChEBI" id="CHEBI:59789"/>
    </ligand>
</feature>
<feature type="binding site" evidence="1">
    <location>
        <position position="303"/>
    </location>
    <ligand>
        <name>S-adenosyl-L-methionine</name>
        <dbReference type="ChEBI" id="CHEBI:59789"/>
    </ligand>
</feature>
<feature type="binding site" evidence="1">
    <location>
        <position position="322"/>
    </location>
    <ligand>
        <name>S-adenosyl-L-methionine</name>
        <dbReference type="ChEBI" id="CHEBI:59789"/>
    </ligand>
</feature>
<sequence>MKKQRNLRSMAAQAVEQVVEQGQSLSNILPPLQQKVSDKDKALLQELCFGVLRTLSQLDWLINKLMARPMTGKQRTVHYLIMVGLYQLLYTRIPPHAALAETVEGAIAIKRPQLKGLINGVLRQFQRQQEELLAEFNASDARYLHPSWLLKRLQKAYPEQWQSIVEANNQRPPMWLRVNRTHHSRDSWLALLDEAGMKGFPHADYPDAVRLETPAPVHALPGFEDGWVTVQDASAQGCMTWLAPQNGEHILDLCAAPGGKTTHILEVAPEAQVVAVDIDEQRLSRVYDNLKRLGMKATVKQGDGRYPSQWCGEQQFDRILLDAPCSATGVIRRHPDIKWLRRDRDIPELAQLQSEILDAIWPHLKSGGTLVYATCSVLPEENSLQIKAFLQRTADAELCETGTPEQPGKQNLPGAEEGDGFFYAKLIKK</sequence>
<evidence type="ECO:0000255" key="1">
    <source>
        <dbReference type="HAMAP-Rule" id="MF_01856"/>
    </source>
</evidence>
<name>RSMB_ECO24</name>
<keyword id="KW-0963">Cytoplasm</keyword>
<keyword id="KW-0489">Methyltransferase</keyword>
<keyword id="KW-1185">Reference proteome</keyword>
<keyword id="KW-0694">RNA-binding</keyword>
<keyword id="KW-0698">rRNA processing</keyword>
<keyword id="KW-0949">S-adenosyl-L-methionine</keyword>
<keyword id="KW-0808">Transferase</keyword>
<accession>A7ZSH7</accession>
<reference key="1">
    <citation type="journal article" date="2008" name="J. Bacteriol.">
        <title>The pangenome structure of Escherichia coli: comparative genomic analysis of E. coli commensal and pathogenic isolates.</title>
        <authorList>
            <person name="Rasko D.A."/>
            <person name="Rosovitz M.J."/>
            <person name="Myers G.S.A."/>
            <person name="Mongodin E.F."/>
            <person name="Fricke W.F."/>
            <person name="Gajer P."/>
            <person name="Crabtree J."/>
            <person name="Sebaihia M."/>
            <person name="Thomson N.R."/>
            <person name="Chaudhuri R."/>
            <person name="Henderson I.R."/>
            <person name="Sperandio V."/>
            <person name="Ravel J."/>
        </authorList>
    </citation>
    <scope>NUCLEOTIDE SEQUENCE [LARGE SCALE GENOMIC DNA]</scope>
    <source>
        <strain>E24377A / ETEC</strain>
    </source>
</reference>
<proteinExistence type="inferred from homology"/>